<accession>P56375</accession>
<accession>Q5SPV7</accession>
<accession>Q8BQX2</accession>
<organism>
    <name type="scientific">Mus musculus</name>
    <name type="common">Mouse</name>
    <dbReference type="NCBI Taxonomy" id="10090"/>
    <lineage>
        <taxon>Eukaryota</taxon>
        <taxon>Metazoa</taxon>
        <taxon>Chordata</taxon>
        <taxon>Craniata</taxon>
        <taxon>Vertebrata</taxon>
        <taxon>Euteleostomi</taxon>
        <taxon>Mammalia</taxon>
        <taxon>Eutheria</taxon>
        <taxon>Euarchontoglires</taxon>
        <taxon>Glires</taxon>
        <taxon>Rodentia</taxon>
        <taxon>Myomorpha</taxon>
        <taxon>Muroidea</taxon>
        <taxon>Muridae</taxon>
        <taxon>Murinae</taxon>
        <taxon>Mus</taxon>
        <taxon>Mus</taxon>
    </lineage>
</organism>
<comment type="catalytic activity">
    <reaction>
        <text>an acyl phosphate + H2O = a carboxylate + phosphate + H(+)</text>
        <dbReference type="Rhea" id="RHEA:14965"/>
        <dbReference type="ChEBI" id="CHEBI:15377"/>
        <dbReference type="ChEBI" id="CHEBI:15378"/>
        <dbReference type="ChEBI" id="CHEBI:29067"/>
        <dbReference type="ChEBI" id="CHEBI:43474"/>
        <dbReference type="ChEBI" id="CHEBI:59918"/>
        <dbReference type="EC" id="3.6.1.7"/>
    </reaction>
</comment>
<comment type="similarity">
    <text evidence="3">Belongs to the acylphosphatase family.</text>
</comment>
<comment type="sequence caution" evidence="3">
    <conflict type="erroneous initiation">
        <sequence resource="EMBL-CDS" id="AAH27642"/>
    </conflict>
    <text>Truncated N-terminus.</text>
</comment>
<feature type="chain" id="PRO_0000158543" description="Acylphosphatase-2">
    <location>
        <begin position="1"/>
        <end position="106"/>
    </location>
</feature>
<feature type="domain" description="Acylphosphatase-like" evidence="2">
    <location>
        <begin position="16"/>
        <end position="106"/>
    </location>
</feature>
<feature type="active site" evidence="2">
    <location>
        <position position="31"/>
    </location>
</feature>
<feature type="active site" evidence="2">
    <location>
        <position position="49"/>
    </location>
</feature>
<feature type="modified residue" description="Phosphoserine" evidence="1">
    <location>
        <position position="100"/>
    </location>
</feature>
<feature type="sequence conflict" description="In Ref. 3; AAH27642." evidence="3" ref="3">
    <original>G</original>
    <variation>W</variation>
    <location>
        <position position="4"/>
    </location>
</feature>
<feature type="sequence conflict" description="In Ref. 1; BAC32649." evidence="3" ref="1">
    <original>F</original>
    <variation>L</variation>
    <location>
        <position position="22"/>
    </location>
</feature>
<feature type="sequence conflict" description="In Ref. 1; BAC32649." evidence="3" ref="1">
    <original>E</original>
    <variation>K</variation>
    <location>
        <position position="63"/>
    </location>
</feature>
<evidence type="ECO:0000250" key="1">
    <source>
        <dbReference type="UniProtKB" id="P35745"/>
    </source>
</evidence>
<evidence type="ECO:0000255" key="2">
    <source>
        <dbReference type="PROSITE-ProRule" id="PRU00520"/>
    </source>
</evidence>
<evidence type="ECO:0000305" key="3"/>
<protein>
    <recommendedName>
        <fullName>Acylphosphatase-2</fullName>
        <ecNumber>3.6.1.7</ecNumber>
    </recommendedName>
    <alternativeName>
        <fullName>Acylphosphatase, muscle type isozyme</fullName>
    </alternativeName>
    <alternativeName>
        <fullName>Acylphosphate phosphohydrolase 2</fullName>
    </alternativeName>
</protein>
<name>ACYP2_MOUSE</name>
<proteinExistence type="evidence at protein level"/>
<reference key="1">
    <citation type="journal article" date="2005" name="Science">
        <title>The transcriptional landscape of the mammalian genome.</title>
        <authorList>
            <person name="Carninci P."/>
            <person name="Kasukawa T."/>
            <person name="Katayama S."/>
            <person name="Gough J."/>
            <person name="Frith M.C."/>
            <person name="Maeda N."/>
            <person name="Oyama R."/>
            <person name="Ravasi T."/>
            <person name="Lenhard B."/>
            <person name="Wells C."/>
            <person name="Kodzius R."/>
            <person name="Shimokawa K."/>
            <person name="Bajic V.B."/>
            <person name="Brenner S.E."/>
            <person name="Batalov S."/>
            <person name="Forrest A.R."/>
            <person name="Zavolan M."/>
            <person name="Davis M.J."/>
            <person name="Wilming L.G."/>
            <person name="Aidinis V."/>
            <person name="Allen J.E."/>
            <person name="Ambesi-Impiombato A."/>
            <person name="Apweiler R."/>
            <person name="Aturaliya R.N."/>
            <person name="Bailey T.L."/>
            <person name="Bansal M."/>
            <person name="Baxter L."/>
            <person name="Beisel K.W."/>
            <person name="Bersano T."/>
            <person name="Bono H."/>
            <person name="Chalk A.M."/>
            <person name="Chiu K.P."/>
            <person name="Choudhary V."/>
            <person name="Christoffels A."/>
            <person name="Clutterbuck D.R."/>
            <person name="Crowe M.L."/>
            <person name="Dalla E."/>
            <person name="Dalrymple B.P."/>
            <person name="de Bono B."/>
            <person name="Della Gatta G."/>
            <person name="di Bernardo D."/>
            <person name="Down T."/>
            <person name="Engstrom P."/>
            <person name="Fagiolini M."/>
            <person name="Faulkner G."/>
            <person name="Fletcher C.F."/>
            <person name="Fukushima T."/>
            <person name="Furuno M."/>
            <person name="Futaki S."/>
            <person name="Gariboldi M."/>
            <person name="Georgii-Hemming P."/>
            <person name="Gingeras T.R."/>
            <person name="Gojobori T."/>
            <person name="Green R.E."/>
            <person name="Gustincich S."/>
            <person name="Harbers M."/>
            <person name="Hayashi Y."/>
            <person name="Hensch T.K."/>
            <person name="Hirokawa N."/>
            <person name="Hill D."/>
            <person name="Huminiecki L."/>
            <person name="Iacono M."/>
            <person name="Ikeo K."/>
            <person name="Iwama A."/>
            <person name="Ishikawa T."/>
            <person name="Jakt M."/>
            <person name="Kanapin A."/>
            <person name="Katoh M."/>
            <person name="Kawasawa Y."/>
            <person name="Kelso J."/>
            <person name="Kitamura H."/>
            <person name="Kitano H."/>
            <person name="Kollias G."/>
            <person name="Krishnan S.P."/>
            <person name="Kruger A."/>
            <person name="Kummerfeld S.K."/>
            <person name="Kurochkin I.V."/>
            <person name="Lareau L.F."/>
            <person name="Lazarevic D."/>
            <person name="Lipovich L."/>
            <person name="Liu J."/>
            <person name="Liuni S."/>
            <person name="McWilliam S."/>
            <person name="Madan Babu M."/>
            <person name="Madera M."/>
            <person name="Marchionni L."/>
            <person name="Matsuda H."/>
            <person name="Matsuzawa S."/>
            <person name="Miki H."/>
            <person name="Mignone F."/>
            <person name="Miyake S."/>
            <person name="Morris K."/>
            <person name="Mottagui-Tabar S."/>
            <person name="Mulder N."/>
            <person name="Nakano N."/>
            <person name="Nakauchi H."/>
            <person name="Ng P."/>
            <person name="Nilsson R."/>
            <person name="Nishiguchi S."/>
            <person name="Nishikawa S."/>
            <person name="Nori F."/>
            <person name="Ohara O."/>
            <person name="Okazaki Y."/>
            <person name="Orlando V."/>
            <person name="Pang K.C."/>
            <person name="Pavan W.J."/>
            <person name="Pavesi G."/>
            <person name="Pesole G."/>
            <person name="Petrovsky N."/>
            <person name="Piazza S."/>
            <person name="Reed J."/>
            <person name="Reid J.F."/>
            <person name="Ring B.Z."/>
            <person name="Ringwald M."/>
            <person name="Rost B."/>
            <person name="Ruan Y."/>
            <person name="Salzberg S.L."/>
            <person name="Sandelin A."/>
            <person name="Schneider C."/>
            <person name="Schoenbach C."/>
            <person name="Sekiguchi K."/>
            <person name="Semple C.A."/>
            <person name="Seno S."/>
            <person name="Sessa L."/>
            <person name="Sheng Y."/>
            <person name="Shibata Y."/>
            <person name="Shimada H."/>
            <person name="Shimada K."/>
            <person name="Silva D."/>
            <person name="Sinclair B."/>
            <person name="Sperling S."/>
            <person name="Stupka E."/>
            <person name="Sugiura K."/>
            <person name="Sultana R."/>
            <person name="Takenaka Y."/>
            <person name="Taki K."/>
            <person name="Tammoja K."/>
            <person name="Tan S.L."/>
            <person name="Tang S."/>
            <person name="Taylor M.S."/>
            <person name="Tegner J."/>
            <person name="Teichmann S.A."/>
            <person name="Ueda H.R."/>
            <person name="van Nimwegen E."/>
            <person name="Verardo R."/>
            <person name="Wei C.L."/>
            <person name="Yagi K."/>
            <person name="Yamanishi H."/>
            <person name="Zabarovsky E."/>
            <person name="Zhu S."/>
            <person name="Zimmer A."/>
            <person name="Hide W."/>
            <person name="Bult C."/>
            <person name="Grimmond S.M."/>
            <person name="Teasdale R.D."/>
            <person name="Liu E.T."/>
            <person name="Brusic V."/>
            <person name="Quackenbush J."/>
            <person name="Wahlestedt C."/>
            <person name="Mattick J.S."/>
            <person name="Hume D.A."/>
            <person name="Kai C."/>
            <person name="Sasaki D."/>
            <person name="Tomaru Y."/>
            <person name="Fukuda S."/>
            <person name="Kanamori-Katayama M."/>
            <person name="Suzuki M."/>
            <person name="Aoki J."/>
            <person name="Arakawa T."/>
            <person name="Iida J."/>
            <person name="Imamura K."/>
            <person name="Itoh M."/>
            <person name="Kato T."/>
            <person name="Kawaji H."/>
            <person name="Kawagashira N."/>
            <person name="Kawashima T."/>
            <person name="Kojima M."/>
            <person name="Kondo S."/>
            <person name="Konno H."/>
            <person name="Nakano K."/>
            <person name="Ninomiya N."/>
            <person name="Nishio T."/>
            <person name="Okada M."/>
            <person name="Plessy C."/>
            <person name="Shibata K."/>
            <person name="Shiraki T."/>
            <person name="Suzuki S."/>
            <person name="Tagami M."/>
            <person name="Waki K."/>
            <person name="Watahiki A."/>
            <person name="Okamura-Oho Y."/>
            <person name="Suzuki H."/>
            <person name="Kawai J."/>
            <person name="Hayashizaki Y."/>
        </authorList>
    </citation>
    <scope>NUCLEOTIDE SEQUENCE [LARGE SCALE MRNA]</scope>
    <source>
        <strain>C57BL/6J</strain>
        <tissue>Corpora quadrigemina</tissue>
        <tissue>Tongue</tissue>
    </source>
</reference>
<reference key="2">
    <citation type="journal article" date="2009" name="PLoS Biol.">
        <title>Lineage-specific biology revealed by a finished genome assembly of the mouse.</title>
        <authorList>
            <person name="Church D.M."/>
            <person name="Goodstadt L."/>
            <person name="Hillier L.W."/>
            <person name="Zody M.C."/>
            <person name="Goldstein S."/>
            <person name="She X."/>
            <person name="Bult C.J."/>
            <person name="Agarwala R."/>
            <person name="Cherry J.L."/>
            <person name="DiCuccio M."/>
            <person name="Hlavina W."/>
            <person name="Kapustin Y."/>
            <person name="Meric P."/>
            <person name="Maglott D."/>
            <person name="Birtle Z."/>
            <person name="Marques A.C."/>
            <person name="Graves T."/>
            <person name="Zhou S."/>
            <person name="Teague B."/>
            <person name="Potamousis K."/>
            <person name="Churas C."/>
            <person name="Place M."/>
            <person name="Herschleb J."/>
            <person name="Runnheim R."/>
            <person name="Forrest D."/>
            <person name="Amos-Landgraf J."/>
            <person name="Schwartz D.C."/>
            <person name="Cheng Z."/>
            <person name="Lindblad-Toh K."/>
            <person name="Eichler E.E."/>
            <person name="Ponting C.P."/>
        </authorList>
    </citation>
    <scope>NUCLEOTIDE SEQUENCE [LARGE SCALE GENOMIC DNA]</scope>
    <source>
        <strain>C57BL/6J</strain>
    </source>
</reference>
<reference key="3">
    <citation type="journal article" date="2004" name="Genome Res.">
        <title>The status, quality, and expansion of the NIH full-length cDNA project: the Mammalian Gene Collection (MGC).</title>
        <authorList>
            <consortium name="The MGC Project Team"/>
        </authorList>
    </citation>
    <scope>NUCLEOTIDE SEQUENCE [LARGE SCALE MRNA]</scope>
    <source>
        <strain>C57BL/6J</strain>
        <tissue>Mammary gland</tissue>
    </source>
</reference>
<reference key="4">
    <citation type="journal article" date="2010" name="Cell">
        <title>A tissue-specific atlas of mouse protein phosphorylation and expression.</title>
        <authorList>
            <person name="Huttlin E.L."/>
            <person name="Jedrychowski M.P."/>
            <person name="Elias J.E."/>
            <person name="Goswami T."/>
            <person name="Rad R."/>
            <person name="Beausoleil S.A."/>
            <person name="Villen J."/>
            <person name="Haas W."/>
            <person name="Sowa M.E."/>
            <person name="Gygi S.P."/>
        </authorList>
    </citation>
    <scope>IDENTIFICATION BY MASS SPECTROMETRY [LARGE SCALE ANALYSIS]</scope>
    <source>
        <tissue>Brain</tissue>
        <tissue>Brown adipose tissue</tissue>
        <tissue>Heart</tissue>
        <tissue>Kidney</tissue>
        <tissue>Liver</tissue>
        <tissue>Lung</tissue>
        <tissue>Spleen</tissue>
        <tissue>Testis</tissue>
    </source>
</reference>
<keyword id="KW-0378">Hydrolase</keyword>
<keyword id="KW-0597">Phosphoprotein</keyword>
<keyword id="KW-1185">Reference proteome</keyword>
<gene>
    <name type="primary">Acyp2</name>
    <name type="synonym">Acyp</name>
</gene>
<sequence>MLLGRRLAAMTELLKSVDYEVFGTVQGVCFRMYTEGEAKKRGLVGWVKNTSKGTVTGQVQGPEEKVDAMKSWLSKVGSPSSRIDRADFSNEKTISKLEYSDFSIRY</sequence>
<dbReference type="EC" id="3.6.1.7"/>
<dbReference type="EMBL" id="AK046238">
    <property type="protein sequence ID" value="BAC32649.1"/>
    <property type="molecule type" value="mRNA"/>
</dbReference>
<dbReference type="EMBL" id="AK009134">
    <property type="protein sequence ID" value="BAB26095.2"/>
    <property type="molecule type" value="mRNA"/>
</dbReference>
<dbReference type="EMBL" id="AL732595">
    <property type="status" value="NOT_ANNOTATED_CDS"/>
    <property type="molecule type" value="Genomic_DNA"/>
</dbReference>
<dbReference type="EMBL" id="AL844147">
    <property type="status" value="NOT_ANNOTATED_CDS"/>
    <property type="molecule type" value="Genomic_DNA"/>
</dbReference>
<dbReference type="EMBL" id="BC027642">
    <property type="protein sequence ID" value="AAH27642.1"/>
    <property type="status" value="ALT_INIT"/>
    <property type="molecule type" value="mRNA"/>
</dbReference>
<dbReference type="CCDS" id="CCDS24507.1"/>
<dbReference type="RefSeq" id="NP_083620.1">
    <property type="nucleotide sequence ID" value="NM_029344.4"/>
</dbReference>
<dbReference type="SMR" id="P56375"/>
<dbReference type="BioGRID" id="217587">
    <property type="interactions" value="3"/>
</dbReference>
<dbReference type="FunCoup" id="P56375">
    <property type="interactions" value="615"/>
</dbReference>
<dbReference type="STRING" id="10090.ENSMUSP00000074195"/>
<dbReference type="GlyGen" id="P56375">
    <property type="glycosylation" value="2 sites, 1 O-linked glycan (2 sites)"/>
</dbReference>
<dbReference type="iPTMnet" id="P56375"/>
<dbReference type="PhosphoSitePlus" id="P56375"/>
<dbReference type="SwissPalm" id="P56375"/>
<dbReference type="CPTAC" id="non-CPTAC-3759"/>
<dbReference type="jPOST" id="P56375"/>
<dbReference type="PaxDb" id="10090-ENSMUSP00000074195"/>
<dbReference type="PeptideAtlas" id="P56375"/>
<dbReference type="ProteomicsDB" id="285663"/>
<dbReference type="Pumba" id="P56375"/>
<dbReference type="Antibodypedia" id="30250">
    <property type="antibodies" value="109 antibodies from 22 providers"/>
</dbReference>
<dbReference type="DNASU" id="75572"/>
<dbReference type="Ensembl" id="ENSMUST00000074613.4">
    <property type="protein sequence ID" value="ENSMUSP00000074195.4"/>
    <property type="gene ID" value="ENSMUSG00000060923.6"/>
</dbReference>
<dbReference type="GeneID" id="75572"/>
<dbReference type="KEGG" id="mmu:75572"/>
<dbReference type="UCSC" id="uc007ihw.1">
    <property type="organism name" value="mouse"/>
</dbReference>
<dbReference type="AGR" id="MGI:1922822"/>
<dbReference type="CTD" id="98"/>
<dbReference type="MGI" id="MGI:1922822">
    <property type="gene designation" value="Acyp2"/>
</dbReference>
<dbReference type="VEuPathDB" id="HostDB:ENSMUSG00000060923"/>
<dbReference type="eggNOG" id="KOG3360">
    <property type="taxonomic scope" value="Eukaryota"/>
</dbReference>
<dbReference type="GeneTree" id="ENSGT00390000011103"/>
<dbReference type="HOGENOM" id="CLU_141932_0_1_1"/>
<dbReference type="InParanoid" id="P56375"/>
<dbReference type="OMA" id="HAIMAEN"/>
<dbReference type="OrthoDB" id="7961613at2759"/>
<dbReference type="PhylomeDB" id="P56375"/>
<dbReference type="TreeFam" id="TF300288"/>
<dbReference type="BioGRID-ORCS" id="75572">
    <property type="hits" value="4 hits in 78 CRISPR screens"/>
</dbReference>
<dbReference type="ChiTaRS" id="Acyp2">
    <property type="organism name" value="mouse"/>
</dbReference>
<dbReference type="PRO" id="PR:P56375"/>
<dbReference type="Proteomes" id="UP000000589">
    <property type="component" value="Chromosome 11"/>
</dbReference>
<dbReference type="RNAct" id="P56375">
    <property type="molecule type" value="protein"/>
</dbReference>
<dbReference type="Bgee" id="ENSMUSG00000060923">
    <property type="expression patterns" value="Expressed in intercostal muscle and 262 other cell types or tissues"/>
</dbReference>
<dbReference type="GO" id="GO:0005739">
    <property type="term" value="C:mitochondrion"/>
    <property type="evidence" value="ECO:0007005"/>
    <property type="project" value="MGI"/>
</dbReference>
<dbReference type="GO" id="GO:0003998">
    <property type="term" value="F:acylphosphatase activity"/>
    <property type="evidence" value="ECO:0007669"/>
    <property type="project" value="UniProtKB-EC"/>
</dbReference>
<dbReference type="GO" id="GO:0042802">
    <property type="term" value="F:identical protein binding"/>
    <property type="evidence" value="ECO:0007669"/>
    <property type="project" value="Ensembl"/>
</dbReference>
<dbReference type="FunFam" id="3.30.70.100:FF:000011">
    <property type="entry name" value="Acylphosphatase"/>
    <property type="match status" value="1"/>
</dbReference>
<dbReference type="Gene3D" id="3.30.70.100">
    <property type="match status" value="1"/>
</dbReference>
<dbReference type="InterPro" id="IPR020456">
    <property type="entry name" value="Acylphosphatase"/>
</dbReference>
<dbReference type="InterPro" id="IPR001792">
    <property type="entry name" value="Acylphosphatase-like_dom"/>
</dbReference>
<dbReference type="InterPro" id="IPR036046">
    <property type="entry name" value="Acylphosphatase-like_dom_sf"/>
</dbReference>
<dbReference type="InterPro" id="IPR017968">
    <property type="entry name" value="Acylphosphatase_CS"/>
</dbReference>
<dbReference type="PANTHER" id="PTHR10029">
    <property type="entry name" value="ACYLPHOSPHATASE"/>
    <property type="match status" value="1"/>
</dbReference>
<dbReference type="PANTHER" id="PTHR10029:SF20">
    <property type="entry name" value="ACYLPHOSPHATASE-2"/>
    <property type="match status" value="1"/>
</dbReference>
<dbReference type="Pfam" id="PF00708">
    <property type="entry name" value="Acylphosphatase"/>
    <property type="match status" value="1"/>
</dbReference>
<dbReference type="PRINTS" id="PR00112">
    <property type="entry name" value="ACYLPHPHTASE"/>
</dbReference>
<dbReference type="SUPFAM" id="SSF54975">
    <property type="entry name" value="Acylphosphatase/BLUF domain-like"/>
    <property type="match status" value="1"/>
</dbReference>
<dbReference type="PROSITE" id="PS00150">
    <property type="entry name" value="ACYLPHOSPHATASE_1"/>
    <property type="match status" value="1"/>
</dbReference>
<dbReference type="PROSITE" id="PS00151">
    <property type="entry name" value="ACYLPHOSPHATASE_2"/>
    <property type="match status" value="1"/>
</dbReference>
<dbReference type="PROSITE" id="PS51160">
    <property type="entry name" value="ACYLPHOSPHATASE_3"/>
    <property type="match status" value="1"/>
</dbReference>